<reference key="1">
    <citation type="submission" date="2008-04" db="EMBL/GenBank/DDBJ databases">
        <title>Complete sequence of Yersinia pseudotuberculosis PB1/+.</title>
        <authorList>
            <person name="Copeland A."/>
            <person name="Lucas S."/>
            <person name="Lapidus A."/>
            <person name="Glavina del Rio T."/>
            <person name="Dalin E."/>
            <person name="Tice H."/>
            <person name="Bruce D."/>
            <person name="Goodwin L."/>
            <person name="Pitluck S."/>
            <person name="Munk A.C."/>
            <person name="Brettin T."/>
            <person name="Detter J.C."/>
            <person name="Han C."/>
            <person name="Tapia R."/>
            <person name="Schmutz J."/>
            <person name="Larimer F."/>
            <person name="Land M."/>
            <person name="Hauser L."/>
            <person name="Challacombe J.F."/>
            <person name="Green L."/>
            <person name="Lindler L.E."/>
            <person name="Nikolich M.P."/>
            <person name="Richardson P."/>
        </authorList>
    </citation>
    <scope>NUCLEOTIDE SEQUENCE [LARGE SCALE GENOMIC DNA]</scope>
    <source>
        <strain>PB1/+</strain>
    </source>
</reference>
<evidence type="ECO:0000255" key="1">
    <source>
        <dbReference type="HAMAP-Rule" id="MF_01101"/>
    </source>
</evidence>
<keyword id="KW-0997">Cell inner membrane</keyword>
<keyword id="KW-1003">Cell membrane</keyword>
<keyword id="KW-0472">Membrane</keyword>
<keyword id="KW-0812">Transmembrane</keyword>
<keyword id="KW-1133">Transmembrane helix</keyword>
<accession>B2K829</accession>
<name>Y2690_YERPB</name>
<dbReference type="EMBL" id="CP001048">
    <property type="protein sequence ID" value="ACC89650.1"/>
    <property type="molecule type" value="Genomic_DNA"/>
</dbReference>
<dbReference type="KEGG" id="ypb:YPTS_2690"/>
<dbReference type="PATRIC" id="fig|502801.10.peg.2111"/>
<dbReference type="GO" id="GO:0005886">
    <property type="term" value="C:plasma membrane"/>
    <property type="evidence" value="ECO:0007669"/>
    <property type="project" value="UniProtKB-SubCell"/>
</dbReference>
<dbReference type="HAMAP" id="MF_01101">
    <property type="entry name" value="UPF0208"/>
    <property type="match status" value="1"/>
</dbReference>
<dbReference type="InterPro" id="IPR007334">
    <property type="entry name" value="UPF0208"/>
</dbReference>
<dbReference type="NCBIfam" id="NF002493">
    <property type="entry name" value="PRK01816.1"/>
    <property type="match status" value="1"/>
</dbReference>
<dbReference type="Pfam" id="PF04217">
    <property type="entry name" value="DUF412"/>
    <property type="match status" value="1"/>
</dbReference>
<protein>
    <recommendedName>
        <fullName evidence="1">UPF0208 membrane protein YPTS_2690</fullName>
    </recommendedName>
</protein>
<organism>
    <name type="scientific">Yersinia pseudotuberculosis serotype IB (strain PB1/+)</name>
    <dbReference type="NCBI Taxonomy" id="502801"/>
    <lineage>
        <taxon>Bacteria</taxon>
        <taxon>Pseudomonadati</taxon>
        <taxon>Pseudomonadota</taxon>
        <taxon>Gammaproteobacteria</taxon>
        <taxon>Enterobacterales</taxon>
        <taxon>Yersiniaceae</taxon>
        <taxon>Yersinia</taxon>
    </lineage>
</organism>
<gene>
    <name type="ordered locus">YPTS_2690</name>
</gene>
<sequence>MTIKPSDSVSWFQVLQRGQHYMKTWPADKRLAPVFPENRVTVVTRFGIRFMPPLAIFTLTWQIALGGQLGPAIATALFACGLPLQGLWWLGKRAITPLPPTLLQWFHEVRHKLSEAGQAVAPIEPIPTYQSLADLLKRAFKQLDKTFLDDL</sequence>
<proteinExistence type="inferred from homology"/>
<comment type="subcellular location">
    <subcellularLocation>
        <location evidence="1">Cell inner membrane</location>
        <topology evidence="1">Multi-pass membrane protein</topology>
    </subcellularLocation>
</comment>
<comment type="similarity">
    <text evidence="1">Belongs to the UPF0208 family.</text>
</comment>
<feature type="chain" id="PRO_1000137005" description="UPF0208 membrane protein YPTS_2690">
    <location>
        <begin position="1"/>
        <end position="151"/>
    </location>
</feature>
<feature type="transmembrane region" description="Helical" evidence="1">
    <location>
        <begin position="46"/>
        <end position="66"/>
    </location>
</feature>
<feature type="transmembrane region" description="Helical" evidence="1">
    <location>
        <begin position="69"/>
        <end position="89"/>
    </location>
</feature>